<proteinExistence type="inferred from homology"/>
<reference key="1">
    <citation type="submission" date="2003-10" db="EMBL/GenBank/DDBJ databases">
        <title>The complete genome sequence of the alkaliphilic Bacillus clausii KSM-K16.</title>
        <authorList>
            <person name="Takaki Y."/>
            <person name="Kageyama Y."/>
            <person name="Shimamura S."/>
            <person name="Suzuki H."/>
            <person name="Nishi S."/>
            <person name="Hatada Y."/>
            <person name="Kawai S."/>
            <person name="Ito S."/>
            <person name="Horikoshi K."/>
        </authorList>
    </citation>
    <scope>NUCLEOTIDE SEQUENCE [LARGE SCALE GENOMIC DNA]</scope>
    <source>
        <strain>KSM-K16</strain>
    </source>
</reference>
<protein>
    <recommendedName>
        <fullName evidence="1">DNA-directed RNA polymerase subunit beta'</fullName>
        <shortName evidence="1">RNAP subunit beta'</shortName>
        <ecNumber evidence="1">2.7.7.6</ecNumber>
    </recommendedName>
    <alternativeName>
        <fullName evidence="1">RNA polymerase subunit beta'</fullName>
    </alternativeName>
    <alternativeName>
        <fullName evidence="1">Transcriptase subunit beta'</fullName>
    </alternativeName>
</protein>
<gene>
    <name evidence="1" type="primary">rpoC</name>
    <name type="ordered locus">ABC0143</name>
</gene>
<comment type="function">
    <text evidence="1">DNA-dependent RNA polymerase catalyzes the transcription of DNA into RNA using the four ribonucleoside triphosphates as substrates.</text>
</comment>
<comment type="catalytic activity">
    <reaction evidence="1">
        <text>RNA(n) + a ribonucleoside 5'-triphosphate = RNA(n+1) + diphosphate</text>
        <dbReference type="Rhea" id="RHEA:21248"/>
        <dbReference type="Rhea" id="RHEA-COMP:14527"/>
        <dbReference type="Rhea" id="RHEA-COMP:17342"/>
        <dbReference type="ChEBI" id="CHEBI:33019"/>
        <dbReference type="ChEBI" id="CHEBI:61557"/>
        <dbReference type="ChEBI" id="CHEBI:140395"/>
        <dbReference type="EC" id="2.7.7.6"/>
    </reaction>
</comment>
<comment type="cofactor">
    <cofactor evidence="1">
        <name>Mg(2+)</name>
        <dbReference type="ChEBI" id="CHEBI:18420"/>
    </cofactor>
    <text evidence="1">Binds 1 Mg(2+) ion per subunit.</text>
</comment>
<comment type="cofactor">
    <cofactor evidence="1">
        <name>Zn(2+)</name>
        <dbReference type="ChEBI" id="CHEBI:29105"/>
    </cofactor>
    <text evidence="1">Binds 2 Zn(2+) ions per subunit.</text>
</comment>
<comment type="subunit">
    <text evidence="1">The RNAP catalytic core consists of 2 alpha, 1 beta, 1 beta' and 1 omega subunit. When a sigma factor is associated with the core the holoenzyme is formed, which can initiate transcription.</text>
</comment>
<comment type="similarity">
    <text evidence="1">Belongs to the RNA polymerase beta' chain family.</text>
</comment>
<evidence type="ECO:0000255" key="1">
    <source>
        <dbReference type="HAMAP-Rule" id="MF_01322"/>
    </source>
</evidence>
<dbReference type="EC" id="2.7.7.6" evidence="1"/>
<dbReference type="EMBL" id="AP006627">
    <property type="protein sequence ID" value="BAD62686.1"/>
    <property type="molecule type" value="Genomic_DNA"/>
</dbReference>
<dbReference type="RefSeq" id="WP_011245007.1">
    <property type="nucleotide sequence ID" value="NC_006582.1"/>
</dbReference>
<dbReference type="SMR" id="Q5WLR9"/>
<dbReference type="STRING" id="66692.ABC0143"/>
<dbReference type="KEGG" id="bcl:ABC0143"/>
<dbReference type="eggNOG" id="COG0086">
    <property type="taxonomic scope" value="Bacteria"/>
</dbReference>
<dbReference type="HOGENOM" id="CLU_000524_3_1_9"/>
<dbReference type="OrthoDB" id="9815296at2"/>
<dbReference type="Proteomes" id="UP000001168">
    <property type="component" value="Chromosome"/>
</dbReference>
<dbReference type="GO" id="GO:0000428">
    <property type="term" value="C:DNA-directed RNA polymerase complex"/>
    <property type="evidence" value="ECO:0007669"/>
    <property type="project" value="UniProtKB-KW"/>
</dbReference>
<dbReference type="GO" id="GO:0003677">
    <property type="term" value="F:DNA binding"/>
    <property type="evidence" value="ECO:0007669"/>
    <property type="project" value="UniProtKB-UniRule"/>
</dbReference>
<dbReference type="GO" id="GO:0003899">
    <property type="term" value="F:DNA-directed RNA polymerase activity"/>
    <property type="evidence" value="ECO:0007669"/>
    <property type="project" value="UniProtKB-UniRule"/>
</dbReference>
<dbReference type="GO" id="GO:0000287">
    <property type="term" value="F:magnesium ion binding"/>
    <property type="evidence" value="ECO:0007669"/>
    <property type="project" value="UniProtKB-UniRule"/>
</dbReference>
<dbReference type="GO" id="GO:0008270">
    <property type="term" value="F:zinc ion binding"/>
    <property type="evidence" value="ECO:0007669"/>
    <property type="project" value="UniProtKB-UniRule"/>
</dbReference>
<dbReference type="GO" id="GO:0006351">
    <property type="term" value="P:DNA-templated transcription"/>
    <property type="evidence" value="ECO:0007669"/>
    <property type="project" value="UniProtKB-UniRule"/>
</dbReference>
<dbReference type="CDD" id="cd02655">
    <property type="entry name" value="RNAP_beta'_C"/>
    <property type="match status" value="1"/>
</dbReference>
<dbReference type="CDD" id="cd01609">
    <property type="entry name" value="RNAP_beta'_N"/>
    <property type="match status" value="1"/>
</dbReference>
<dbReference type="FunFam" id="1.10.132.30:FF:000003">
    <property type="entry name" value="DNA-directed RNA polymerase subunit beta"/>
    <property type="match status" value="1"/>
</dbReference>
<dbReference type="FunFam" id="1.10.150.390:FF:000002">
    <property type="entry name" value="DNA-directed RNA polymerase subunit beta"/>
    <property type="match status" value="1"/>
</dbReference>
<dbReference type="FunFam" id="1.10.40.90:FF:000001">
    <property type="entry name" value="DNA-directed RNA polymerase subunit beta"/>
    <property type="match status" value="1"/>
</dbReference>
<dbReference type="FunFam" id="4.10.860.120:FF:000001">
    <property type="entry name" value="DNA-directed RNA polymerase subunit beta"/>
    <property type="match status" value="1"/>
</dbReference>
<dbReference type="Gene3D" id="1.10.132.30">
    <property type="match status" value="1"/>
</dbReference>
<dbReference type="Gene3D" id="1.10.150.390">
    <property type="match status" value="1"/>
</dbReference>
<dbReference type="Gene3D" id="1.10.1790.20">
    <property type="match status" value="1"/>
</dbReference>
<dbReference type="Gene3D" id="1.10.40.90">
    <property type="match status" value="1"/>
</dbReference>
<dbReference type="Gene3D" id="2.40.40.20">
    <property type="match status" value="1"/>
</dbReference>
<dbReference type="Gene3D" id="2.40.50.100">
    <property type="match status" value="1"/>
</dbReference>
<dbReference type="Gene3D" id="4.10.860.120">
    <property type="entry name" value="RNA polymerase II, clamp domain"/>
    <property type="match status" value="1"/>
</dbReference>
<dbReference type="Gene3D" id="1.10.274.100">
    <property type="entry name" value="RNA polymerase Rpb1, domain 3"/>
    <property type="match status" value="1"/>
</dbReference>
<dbReference type="HAMAP" id="MF_01322">
    <property type="entry name" value="RNApol_bact_RpoC"/>
    <property type="match status" value="1"/>
</dbReference>
<dbReference type="InterPro" id="IPR045867">
    <property type="entry name" value="DNA-dir_RpoC_beta_prime"/>
</dbReference>
<dbReference type="InterPro" id="IPR012754">
    <property type="entry name" value="DNA-dir_RpoC_beta_prime_bact"/>
</dbReference>
<dbReference type="InterPro" id="IPR000722">
    <property type="entry name" value="RNA_pol_asu"/>
</dbReference>
<dbReference type="InterPro" id="IPR006592">
    <property type="entry name" value="RNA_pol_N"/>
</dbReference>
<dbReference type="InterPro" id="IPR007080">
    <property type="entry name" value="RNA_pol_Rpb1_1"/>
</dbReference>
<dbReference type="InterPro" id="IPR007066">
    <property type="entry name" value="RNA_pol_Rpb1_3"/>
</dbReference>
<dbReference type="InterPro" id="IPR042102">
    <property type="entry name" value="RNA_pol_Rpb1_3_sf"/>
</dbReference>
<dbReference type="InterPro" id="IPR007083">
    <property type="entry name" value="RNA_pol_Rpb1_4"/>
</dbReference>
<dbReference type="InterPro" id="IPR007081">
    <property type="entry name" value="RNA_pol_Rpb1_5"/>
</dbReference>
<dbReference type="InterPro" id="IPR044893">
    <property type="entry name" value="RNA_pol_Rpb1_clamp_domain"/>
</dbReference>
<dbReference type="InterPro" id="IPR038120">
    <property type="entry name" value="Rpb1_funnel_sf"/>
</dbReference>
<dbReference type="NCBIfam" id="TIGR02386">
    <property type="entry name" value="rpoC_TIGR"/>
    <property type="match status" value="1"/>
</dbReference>
<dbReference type="PANTHER" id="PTHR19376">
    <property type="entry name" value="DNA-DIRECTED RNA POLYMERASE"/>
    <property type="match status" value="1"/>
</dbReference>
<dbReference type="PANTHER" id="PTHR19376:SF54">
    <property type="entry name" value="DNA-DIRECTED RNA POLYMERASE SUBUNIT BETA"/>
    <property type="match status" value="1"/>
</dbReference>
<dbReference type="Pfam" id="PF04997">
    <property type="entry name" value="RNA_pol_Rpb1_1"/>
    <property type="match status" value="1"/>
</dbReference>
<dbReference type="Pfam" id="PF00623">
    <property type="entry name" value="RNA_pol_Rpb1_2"/>
    <property type="match status" value="2"/>
</dbReference>
<dbReference type="Pfam" id="PF04983">
    <property type="entry name" value="RNA_pol_Rpb1_3"/>
    <property type="match status" value="1"/>
</dbReference>
<dbReference type="Pfam" id="PF05000">
    <property type="entry name" value="RNA_pol_Rpb1_4"/>
    <property type="match status" value="1"/>
</dbReference>
<dbReference type="Pfam" id="PF04998">
    <property type="entry name" value="RNA_pol_Rpb1_5"/>
    <property type="match status" value="2"/>
</dbReference>
<dbReference type="SMART" id="SM00663">
    <property type="entry name" value="RPOLA_N"/>
    <property type="match status" value="1"/>
</dbReference>
<dbReference type="SUPFAM" id="SSF64484">
    <property type="entry name" value="beta and beta-prime subunits of DNA dependent RNA-polymerase"/>
    <property type="match status" value="1"/>
</dbReference>
<name>RPOC_SHOC1</name>
<organism>
    <name type="scientific">Shouchella clausii (strain KSM-K16)</name>
    <name type="common">Alkalihalobacillus clausii</name>
    <dbReference type="NCBI Taxonomy" id="66692"/>
    <lineage>
        <taxon>Bacteria</taxon>
        <taxon>Bacillati</taxon>
        <taxon>Bacillota</taxon>
        <taxon>Bacilli</taxon>
        <taxon>Bacillales</taxon>
        <taxon>Bacillaceae</taxon>
        <taxon>Shouchella</taxon>
    </lineage>
</organism>
<feature type="chain" id="PRO_0000225509" description="DNA-directed RNA polymerase subunit beta'">
    <location>
        <begin position="1"/>
        <end position="1206"/>
    </location>
</feature>
<feature type="binding site" evidence="1">
    <location>
        <position position="60"/>
    </location>
    <ligand>
        <name>Zn(2+)</name>
        <dbReference type="ChEBI" id="CHEBI:29105"/>
        <label>1</label>
    </ligand>
</feature>
<feature type="binding site" evidence="1">
    <location>
        <position position="62"/>
    </location>
    <ligand>
        <name>Zn(2+)</name>
        <dbReference type="ChEBI" id="CHEBI:29105"/>
        <label>1</label>
    </ligand>
</feature>
<feature type="binding site" evidence="1">
    <location>
        <position position="75"/>
    </location>
    <ligand>
        <name>Zn(2+)</name>
        <dbReference type="ChEBI" id="CHEBI:29105"/>
        <label>1</label>
    </ligand>
</feature>
<feature type="binding site" evidence="1">
    <location>
        <position position="78"/>
    </location>
    <ligand>
        <name>Zn(2+)</name>
        <dbReference type="ChEBI" id="CHEBI:29105"/>
        <label>1</label>
    </ligand>
</feature>
<feature type="binding site" evidence="1">
    <location>
        <position position="449"/>
    </location>
    <ligand>
        <name>Mg(2+)</name>
        <dbReference type="ChEBI" id="CHEBI:18420"/>
    </ligand>
</feature>
<feature type="binding site" evidence="1">
    <location>
        <position position="451"/>
    </location>
    <ligand>
        <name>Mg(2+)</name>
        <dbReference type="ChEBI" id="CHEBI:18420"/>
    </ligand>
</feature>
<feature type="binding site" evidence="1">
    <location>
        <position position="453"/>
    </location>
    <ligand>
        <name>Mg(2+)</name>
        <dbReference type="ChEBI" id="CHEBI:18420"/>
    </ligand>
</feature>
<feature type="binding site" evidence="1">
    <location>
        <position position="818"/>
    </location>
    <ligand>
        <name>Zn(2+)</name>
        <dbReference type="ChEBI" id="CHEBI:29105"/>
        <label>2</label>
    </ligand>
</feature>
<feature type="binding site" evidence="1">
    <location>
        <position position="892"/>
    </location>
    <ligand>
        <name>Zn(2+)</name>
        <dbReference type="ChEBI" id="CHEBI:29105"/>
        <label>2</label>
    </ligand>
</feature>
<feature type="binding site" evidence="1">
    <location>
        <position position="899"/>
    </location>
    <ligand>
        <name>Zn(2+)</name>
        <dbReference type="ChEBI" id="CHEBI:29105"/>
        <label>2</label>
    </ligand>
</feature>
<feature type="binding site" evidence="1">
    <location>
        <position position="902"/>
    </location>
    <ligand>
        <name>Zn(2+)</name>
        <dbReference type="ChEBI" id="CHEBI:29105"/>
        <label>2</label>
    </ligand>
</feature>
<accession>Q5WLR9</accession>
<keyword id="KW-0240">DNA-directed RNA polymerase</keyword>
<keyword id="KW-0460">Magnesium</keyword>
<keyword id="KW-0479">Metal-binding</keyword>
<keyword id="KW-0548">Nucleotidyltransferase</keyword>
<keyword id="KW-1185">Reference proteome</keyword>
<keyword id="KW-0804">Transcription</keyword>
<keyword id="KW-0808">Transferase</keyword>
<keyword id="KW-0862">Zinc</keyword>
<sequence length="1206" mass="134497">MIDVNNFEYMKIGLASPNKIRSWSRGEVKKPETINYRTLKPEKDGLFCERIFGPQKDWECHCGKYKRVRYKGVVCDRCGVEVTRAKVRRERMGHIELAAPVSHIWYFKGIPSRMGLVLDMSPRSLEEVIYFASYVVTEPGDTPLEKKQLLSEKEYRAYYDKYGRTFTASMGAEAIRKLLADIDLQKEVNALKEELETAQGQRRTRAIKRLEVLEAFRNSGNEPSWMVLDVLPVIPPELRPMVQLDGGRFATSDLNDLYRRVINRNNRLKRLLDLGAPNIIVQNEKRMLQEAVDALIDNGRRGRPVTGPGNRPLKSLSHMLKGKQGRFRQNLLGKRVDYSGRSVIVVGPNLKMYQCGLPKEMALELFKPFVMKELVSKGLAHNIKSAKRKVERVQPEVWDVLEEVIREHPVLLNRAPTLHRLGIQAFEPILVEGRAIKLHPLVCTAYNADFDGDQMAVHVPLSAEAQAEARILMLAAQNILNPKDGKPVVTPSQDMVLGNYYLTMENANARGEGSVFKDSNEALIAYQNGYVHLHTRIAVPVASLNKPTFADEESNMLLLTTVGKLLFNEIMPDSFPYINEPTASNLEVKTPEKYLVPSNTNVKELLKERDLVPPFKKGFLGNIISEVFKKFKITETSKMLDRMKDLGFKYSTKAGITVGVSDIVVLSEKKEILDEADKKVERIMKQFRRGLITEEERYDRVISIWSDAKDLIQSKLMGTLDARNPIFMMSDSGARGNASNFTQLAGMRGLMANPSGRIIELPIKSSFREGLTVLEYFISTHGARKGLADTALKTADSGYLTRRLVDVAQDVIVRENDCGTDRGLEVTAIKEGTETIEGLYDRLVGRVAFKTVRHPETDEVLVRRGELMNEDTAKQIVDAGVESVTIRSVFTCNTHHGVCKACYGRNLATGSDVEVGEAVGIIAAQSIGEPGTQLTMRTFHTGGVAGDDITQGLPRIQELFEARNPKGQAVITEIDGDVVDVRDGDKREVTVQSELETKNYSIPYGSRLKVAVGDKVVAGQTLTEGSIDPKELLKVTGMGGVQEYLLREVQKVYRLQGVEIGDKHVEVMVRQMLRKVRVVDAGDTGILPGSLVEIQRFNEANKKVLLSNMRPATGRPVLLGITKASLETDSFLSAASFQETTRVLTDAAIKGKRDELLGLKENVIIGKLVPAGTGLARYKTLGIHSAHDERAENEEAGTPEEVLVQD</sequence>